<accession>Q06753</accession>
<organism>
    <name type="scientific">Bacillus subtilis (strain 168)</name>
    <dbReference type="NCBI Taxonomy" id="224308"/>
    <lineage>
        <taxon>Bacteria</taxon>
        <taxon>Bacillati</taxon>
        <taxon>Bacillota</taxon>
        <taxon>Bacilli</taxon>
        <taxon>Bacillales</taxon>
        <taxon>Bacillaceae</taxon>
        <taxon>Bacillus</taxon>
    </lineage>
</organism>
<feature type="chain" id="PRO_0000159820" description="Putative TrmH family tRNA/rRNA methyltransferase YacO">
    <location>
        <begin position="1"/>
        <end position="249"/>
    </location>
</feature>
<feature type="binding site" evidence="1">
    <location>
        <position position="198"/>
    </location>
    <ligand>
        <name>S-adenosyl-L-methionine</name>
        <dbReference type="ChEBI" id="CHEBI:59789"/>
    </ligand>
</feature>
<feature type="binding site" evidence="1">
    <location>
        <position position="218"/>
    </location>
    <ligand>
        <name>S-adenosyl-L-methionine</name>
        <dbReference type="ChEBI" id="CHEBI:59789"/>
    </ligand>
</feature>
<feature type="binding site" evidence="1">
    <location>
        <position position="227"/>
    </location>
    <ligand>
        <name>S-adenosyl-L-methionine</name>
        <dbReference type="ChEBI" id="CHEBI:59789"/>
    </ligand>
</feature>
<evidence type="ECO:0000250" key="1"/>
<evidence type="ECO:0000305" key="2"/>
<proteinExistence type="inferred from homology"/>
<gene>
    <name type="primary">yacO</name>
    <name type="ordered locus">BSU00960</name>
</gene>
<reference key="1">
    <citation type="journal article" date="1994" name="DNA Res.">
        <title>Systematic sequencing of the 180 kilobase region of the Bacillus subtilis chromosome containing the replication origin.</title>
        <authorList>
            <person name="Ogasawara N."/>
            <person name="Nakai S."/>
            <person name="Yoshikawa H."/>
        </authorList>
    </citation>
    <scope>NUCLEOTIDE SEQUENCE [GENOMIC DNA]</scope>
    <source>
        <strain>168</strain>
    </source>
</reference>
<reference key="2">
    <citation type="journal article" date="1997" name="Nature">
        <title>The complete genome sequence of the Gram-positive bacterium Bacillus subtilis.</title>
        <authorList>
            <person name="Kunst F."/>
            <person name="Ogasawara N."/>
            <person name="Moszer I."/>
            <person name="Albertini A.M."/>
            <person name="Alloni G."/>
            <person name="Azevedo V."/>
            <person name="Bertero M.G."/>
            <person name="Bessieres P."/>
            <person name="Bolotin A."/>
            <person name="Borchert S."/>
            <person name="Borriss R."/>
            <person name="Boursier L."/>
            <person name="Brans A."/>
            <person name="Braun M."/>
            <person name="Brignell S.C."/>
            <person name="Bron S."/>
            <person name="Brouillet S."/>
            <person name="Bruschi C.V."/>
            <person name="Caldwell B."/>
            <person name="Capuano V."/>
            <person name="Carter N.M."/>
            <person name="Choi S.-K."/>
            <person name="Codani J.-J."/>
            <person name="Connerton I.F."/>
            <person name="Cummings N.J."/>
            <person name="Daniel R.A."/>
            <person name="Denizot F."/>
            <person name="Devine K.M."/>
            <person name="Duesterhoeft A."/>
            <person name="Ehrlich S.D."/>
            <person name="Emmerson P.T."/>
            <person name="Entian K.-D."/>
            <person name="Errington J."/>
            <person name="Fabret C."/>
            <person name="Ferrari E."/>
            <person name="Foulger D."/>
            <person name="Fritz C."/>
            <person name="Fujita M."/>
            <person name="Fujita Y."/>
            <person name="Fuma S."/>
            <person name="Galizzi A."/>
            <person name="Galleron N."/>
            <person name="Ghim S.-Y."/>
            <person name="Glaser P."/>
            <person name="Goffeau A."/>
            <person name="Golightly E.J."/>
            <person name="Grandi G."/>
            <person name="Guiseppi G."/>
            <person name="Guy B.J."/>
            <person name="Haga K."/>
            <person name="Haiech J."/>
            <person name="Harwood C.R."/>
            <person name="Henaut A."/>
            <person name="Hilbert H."/>
            <person name="Holsappel S."/>
            <person name="Hosono S."/>
            <person name="Hullo M.-F."/>
            <person name="Itaya M."/>
            <person name="Jones L.-M."/>
            <person name="Joris B."/>
            <person name="Karamata D."/>
            <person name="Kasahara Y."/>
            <person name="Klaerr-Blanchard M."/>
            <person name="Klein C."/>
            <person name="Kobayashi Y."/>
            <person name="Koetter P."/>
            <person name="Koningstein G."/>
            <person name="Krogh S."/>
            <person name="Kumano M."/>
            <person name="Kurita K."/>
            <person name="Lapidus A."/>
            <person name="Lardinois S."/>
            <person name="Lauber J."/>
            <person name="Lazarevic V."/>
            <person name="Lee S.-M."/>
            <person name="Levine A."/>
            <person name="Liu H."/>
            <person name="Masuda S."/>
            <person name="Mauel C."/>
            <person name="Medigue C."/>
            <person name="Medina N."/>
            <person name="Mellado R.P."/>
            <person name="Mizuno M."/>
            <person name="Moestl D."/>
            <person name="Nakai S."/>
            <person name="Noback M."/>
            <person name="Noone D."/>
            <person name="O'Reilly M."/>
            <person name="Ogawa K."/>
            <person name="Ogiwara A."/>
            <person name="Oudega B."/>
            <person name="Park S.-H."/>
            <person name="Parro V."/>
            <person name="Pohl T.M."/>
            <person name="Portetelle D."/>
            <person name="Porwollik S."/>
            <person name="Prescott A.M."/>
            <person name="Presecan E."/>
            <person name="Pujic P."/>
            <person name="Purnelle B."/>
            <person name="Rapoport G."/>
            <person name="Rey M."/>
            <person name="Reynolds S."/>
            <person name="Rieger M."/>
            <person name="Rivolta C."/>
            <person name="Rocha E."/>
            <person name="Roche B."/>
            <person name="Rose M."/>
            <person name="Sadaie Y."/>
            <person name="Sato T."/>
            <person name="Scanlan E."/>
            <person name="Schleich S."/>
            <person name="Schroeter R."/>
            <person name="Scoffone F."/>
            <person name="Sekiguchi J."/>
            <person name="Sekowska A."/>
            <person name="Seror S.J."/>
            <person name="Serror P."/>
            <person name="Shin B.-S."/>
            <person name="Soldo B."/>
            <person name="Sorokin A."/>
            <person name="Tacconi E."/>
            <person name="Takagi T."/>
            <person name="Takahashi H."/>
            <person name="Takemaru K."/>
            <person name="Takeuchi M."/>
            <person name="Tamakoshi A."/>
            <person name="Tanaka T."/>
            <person name="Terpstra P."/>
            <person name="Tognoni A."/>
            <person name="Tosato V."/>
            <person name="Uchiyama S."/>
            <person name="Vandenbol M."/>
            <person name="Vannier F."/>
            <person name="Vassarotti A."/>
            <person name="Viari A."/>
            <person name="Wambutt R."/>
            <person name="Wedler E."/>
            <person name="Wedler H."/>
            <person name="Weitzenegger T."/>
            <person name="Winters P."/>
            <person name="Wipat A."/>
            <person name="Yamamoto H."/>
            <person name="Yamane K."/>
            <person name="Yasumoto K."/>
            <person name="Yata K."/>
            <person name="Yoshida K."/>
            <person name="Yoshikawa H.-F."/>
            <person name="Zumstein E."/>
            <person name="Yoshikawa H."/>
            <person name="Danchin A."/>
        </authorList>
    </citation>
    <scope>NUCLEOTIDE SEQUENCE [LARGE SCALE GENOMIC DNA]</scope>
    <source>
        <strain>168</strain>
    </source>
</reference>
<reference key="3">
    <citation type="journal article" date="1994" name="J. Biol. Chem.">
        <title>Clustering and co-transcription of the Bacillus subtilis genes encoding the aminoacyl-tRNA synthetases specific for glutamate and for cysteine and the first enzyme for cysteine biosynthesis.</title>
        <authorList>
            <person name="Gagnon Y."/>
            <person name="Breton R."/>
            <person name="Putzer H."/>
            <person name="Pelchat M."/>
            <person name="Grunberg-Manago M."/>
            <person name="Lapointe J."/>
        </authorList>
    </citation>
    <scope>NUCLEOTIDE SEQUENCE [GENOMIC DNA] OF 1-143</scope>
</reference>
<reference key="4">
    <citation type="journal article" date="1988" name="Gene">
        <title>Characterization of signal-sequence-coding regions selected from the Bacillus subtilis chromosome.</title>
        <authorList>
            <person name="Smith H."/>
            <person name="de Jong A."/>
            <person name="Bron S."/>
            <person name="Venema G."/>
        </authorList>
    </citation>
    <scope>NUCLEOTIDE SEQUENCE [GENOMIC DNA] OF 1-22</scope>
</reference>
<dbReference type="EC" id="2.1.1.-"/>
<dbReference type="EMBL" id="D26185">
    <property type="protein sequence ID" value="BAA05329.1"/>
    <property type="molecule type" value="Genomic_DNA"/>
</dbReference>
<dbReference type="EMBL" id="AL009126">
    <property type="protein sequence ID" value="CAB11872.1"/>
    <property type="molecule type" value="Genomic_DNA"/>
</dbReference>
<dbReference type="EMBL" id="L14580">
    <property type="protein sequence ID" value="AAA21799.1"/>
    <property type="molecule type" value="Genomic_DNA"/>
</dbReference>
<dbReference type="EMBL" id="M22906">
    <property type="status" value="NOT_ANNOTATED_CDS"/>
    <property type="molecule type" value="Genomic_DNA"/>
</dbReference>
<dbReference type="PIR" id="S66124">
    <property type="entry name" value="S66124"/>
</dbReference>
<dbReference type="SMR" id="Q06753"/>
<dbReference type="FunCoup" id="Q06753">
    <property type="interactions" value="491"/>
</dbReference>
<dbReference type="STRING" id="224308.BSU00960"/>
<dbReference type="PaxDb" id="224308-BSU00960"/>
<dbReference type="EnsemblBacteria" id="CAB11872">
    <property type="protein sequence ID" value="CAB11872"/>
    <property type="gene ID" value="BSU_00960"/>
</dbReference>
<dbReference type="GeneID" id="936861"/>
<dbReference type="KEGG" id="bsu:BSU00960"/>
<dbReference type="PATRIC" id="fig|224308.179.peg.99"/>
<dbReference type="eggNOG" id="COG0566">
    <property type="taxonomic scope" value="Bacteria"/>
</dbReference>
<dbReference type="InParanoid" id="Q06753"/>
<dbReference type="OrthoDB" id="9794400at2"/>
<dbReference type="PhylomeDB" id="Q06753"/>
<dbReference type="BioCyc" id="BSUB:BSU00960-MONOMER"/>
<dbReference type="Proteomes" id="UP000001570">
    <property type="component" value="Chromosome"/>
</dbReference>
<dbReference type="GO" id="GO:0005829">
    <property type="term" value="C:cytosol"/>
    <property type="evidence" value="ECO:0000318"/>
    <property type="project" value="GO_Central"/>
</dbReference>
<dbReference type="GO" id="GO:0003723">
    <property type="term" value="F:RNA binding"/>
    <property type="evidence" value="ECO:0007669"/>
    <property type="project" value="InterPro"/>
</dbReference>
<dbReference type="GO" id="GO:0008173">
    <property type="term" value="F:RNA methyltransferase activity"/>
    <property type="evidence" value="ECO:0000318"/>
    <property type="project" value="GO_Central"/>
</dbReference>
<dbReference type="GO" id="GO:0032259">
    <property type="term" value="P:methylation"/>
    <property type="evidence" value="ECO:0007669"/>
    <property type="project" value="UniProtKB-KW"/>
</dbReference>
<dbReference type="GO" id="GO:0006396">
    <property type="term" value="P:RNA processing"/>
    <property type="evidence" value="ECO:0007669"/>
    <property type="project" value="InterPro"/>
</dbReference>
<dbReference type="CDD" id="cd18103">
    <property type="entry name" value="SpoU-like_RlmB"/>
    <property type="match status" value="1"/>
</dbReference>
<dbReference type="FunFam" id="3.40.1280.10:FF:000008">
    <property type="entry name" value="Group 3 RNA methyltransferase TrmH"/>
    <property type="match status" value="1"/>
</dbReference>
<dbReference type="Gene3D" id="3.30.1330.30">
    <property type="match status" value="1"/>
</dbReference>
<dbReference type="Gene3D" id="3.40.1280.10">
    <property type="match status" value="1"/>
</dbReference>
<dbReference type="InterPro" id="IPR029028">
    <property type="entry name" value="Alpha/beta_knot_MTases"/>
</dbReference>
<dbReference type="InterPro" id="IPR029064">
    <property type="entry name" value="Ribosomal_eL30-like_sf"/>
</dbReference>
<dbReference type="InterPro" id="IPR004441">
    <property type="entry name" value="rRNA_MeTrfase_TrmH"/>
</dbReference>
<dbReference type="InterPro" id="IPR001537">
    <property type="entry name" value="SpoU_MeTrfase"/>
</dbReference>
<dbReference type="InterPro" id="IPR013123">
    <property type="entry name" value="SpoU_subst-bd"/>
</dbReference>
<dbReference type="InterPro" id="IPR029026">
    <property type="entry name" value="tRNA_m1G_MTases_N"/>
</dbReference>
<dbReference type="NCBIfam" id="TIGR00186">
    <property type="entry name" value="rRNA_methyl_3"/>
    <property type="match status" value="1"/>
</dbReference>
<dbReference type="PANTHER" id="PTHR46429">
    <property type="entry name" value="23S RRNA (GUANOSINE-2'-O-)-METHYLTRANSFERASE RLMB"/>
    <property type="match status" value="1"/>
</dbReference>
<dbReference type="PANTHER" id="PTHR46429:SF1">
    <property type="entry name" value="23S RRNA (GUANOSINE-2'-O-)-METHYLTRANSFERASE RLMB"/>
    <property type="match status" value="1"/>
</dbReference>
<dbReference type="Pfam" id="PF00588">
    <property type="entry name" value="SpoU_methylase"/>
    <property type="match status" value="1"/>
</dbReference>
<dbReference type="Pfam" id="PF08032">
    <property type="entry name" value="SpoU_sub_bind"/>
    <property type="match status" value="1"/>
</dbReference>
<dbReference type="SMART" id="SM00967">
    <property type="entry name" value="SpoU_sub_bind"/>
    <property type="match status" value="1"/>
</dbReference>
<dbReference type="SUPFAM" id="SSF75217">
    <property type="entry name" value="alpha/beta knot"/>
    <property type="match status" value="1"/>
</dbReference>
<dbReference type="SUPFAM" id="SSF55315">
    <property type="entry name" value="L30e-like"/>
    <property type="match status" value="1"/>
</dbReference>
<comment type="similarity">
    <text evidence="2">Belongs to the class IV-like SAM-binding methyltransferase superfamily. RNA methyltransferase TrmH family.</text>
</comment>
<name>YACO_BACSU</name>
<keyword id="KW-0489">Methyltransferase</keyword>
<keyword id="KW-1185">Reference proteome</keyword>
<keyword id="KW-0808">Transferase</keyword>
<protein>
    <recommendedName>
        <fullName>Putative TrmH family tRNA/rRNA methyltransferase YacO</fullName>
        <ecNumber>2.1.1.-</ecNumber>
    </recommendedName>
</protein>
<sequence>MSQQHDYVIGKNAVIETLKSDRKLYKLWMAENTVKGQAQQVIELAKKQGITIQYVPRKKLDQMVTGQHQGVVAQVAAYEYAELDDLYKAAEEKNEQPFFLILDELEDPHNLGSIMRTADAVGAHGIVIPKRRAVGLTTTVAKASTGAIEHIPVARVTNLARTLEEMKERGIWVVGTDASAREDFRNMDGNMPLALVIGSEGKGMGRLVKEKCDFLIKLPMAGKVTSLNASVAAGLLMYEVYRKRNPVGE</sequence>